<sequence length="328" mass="37450">MNDQWYKHLIGARTIKTGIAIFLTAVFCMALDLTPIYAILTAVVTIEPTAKASLIKGYRRLPATVIGAGFAVLFTYLFGDQSPFTYALSATFTILFCTKLKLQVGTNVAVLTSLAMIPGIHDAYIFNFLSRTLTAIIGLVTSGLINFMVFPPKYYGQVEEKLSKTDALMYKLFYNRCQELILSRLQSDKSEKAYKNIFNLNNQVETLISYQRDELSYHKKKECDWKLLNQLTKRAYTNRLFITHLSNIIYLPKNTRVNFSGDEKMALLKISSSIKDIFYDGTFKREDDSVETLRSTIKALEISGENQIKSHILYEVLMIYRLLDSRYA</sequence>
<gene>
    <name type="ordered locus">SAHV_1874</name>
</gene>
<dbReference type="EMBL" id="AB035448">
    <property type="protein sequence ID" value="BAB03320.1"/>
    <property type="molecule type" value="Genomic_DNA"/>
</dbReference>
<dbReference type="EMBL" id="AP009324">
    <property type="protein sequence ID" value="BAF78757.1"/>
    <property type="molecule type" value="Genomic_DNA"/>
</dbReference>
<dbReference type="RefSeq" id="WP_000999717.1">
    <property type="nucleotide sequence ID" value="NC_009782.1"/>
</dbReference>
<dbReference type="SMR" id="Q9KWL2"/>
<dbReference type="KEGG" id="saw:SAHV_1874"/>
<dbReference type="HOGENOM" id="CLU_067028_0_0_9"/>
<dbReference type="GO" id="GO:0005886">
    <property type="term" value="C:plasma membrane"/>
    <property type="evidence" value="ECO:0007669"/>
    <property type="project" value="UniProtKB-SubCell"/>
</dbReference>
<dbReference type="InterPro" id="IPR010343">
    <property type="entry name" value="ArAE_1"/>
</dbReference>
<dbReference type="PANTHER" id="PTHR31086">
    <property type="entry name" value="ALUMINUM-ACTIVATED MALATE TRANSPORTER 10"/>
    <property type="match status" value="1"/>
</dbReference>
<dbReference type="Pfam" id="PF06081">
    <property type="entry name" value="ArAE_1"/>
    <property type="match status" value="1"/>
</dbReference>
<accession>Q9KWL2</accession>
<accession>A7X412</accession>
<feature type="chain" id="PRO_0000283021" description="UPF0421 protein SAHV_1874">
    <location>
        <begin position="1"/>
        <end position="328"/>
    </location>
</feature>
<feature type="transmembrane region" description="Helical" evidence="1">
    <location>
        <begin position="19"/>
        <end position="39"/>
    </location>
</feature>
<feature type="transmembrane region" description="Helical" evidence="1">
    <location>
        <begin position="61"/>
        <end position="81"/>
    </location>
</feature>
<feature type="transmembrane region" description="Helical" evidence="1">
    <location>
        <begin position="108"/>
        <end position="128"/>
    </location>
</feature>
<feature type="transmembrane region" description="Helical" evidence="1">
    <location>
        <begin position="132"/>
        <end position="152"/>
    </location>
</feature>
<name>Y1874_STAA1</name>
<protein>
    <recommendedName>
        <fullName>UPF0421 protein SAHV_1874</fullName>
    </recommendedName>
</protein>
<comment type="subcellular location">
    <subcellularLocation>
        <location evidence="2">Cell membrane</location>
        <topology evidence="2">Multi-pass membrane protein</topology>
    </subcellularLocation>
</comment>
<comment type="similarity">
    <text evidence="2">Belongs to the UPF0421 family.</text>
</comment>
<proteinExistence type="inferred from homology"/>
<evidence type="ECO:0000255" key="1"/>
<evidence type="ECO:0000305" key="2"/>
<reference key="1">
    <citation type="journal article" date="2000" name="Biochem. Biophys. Res. Commun.">
        <title>Identification of the up- and down-regulated genes in vancomycin-resistant Staphylococcus aureus strains Mu3 and Mu50 by cDNA differential hybridization method.</title>
        <authorList>
            <person name="Kuroda M."/>
            <person name="Kuwahara-Arai K."/>
            <person name="Hiramatsu K."/>
        </authorList>
    </citation>
    <scope>NUCLEOTIDE SEQUENCE [GENOMIC DNA]</scope>
</reference>
<reference key="2">
    <citation type="journal article" date="2008" name="Antimicrob. Agents Chemother.">
        <title>Mutated response regulator graR is responsible for phenotypic conversion of Staphylococcus aureus from heterogeneous vancomycin-intermediate resistance to vancomycin-intermediate resistance.</title>
        <authorList>
            <person name="Neoh H.-M."/>
            <person name="Cui L."/>
            <person name="Yuzawa H."/>
            <person name="Takeuchi F."/>
            <person name="Matsuo M."/>
            <person name="Hiramatsu K."/>
        </authorList>
    </citation>
    <scope>NUCLEOTIDE SEQUENCE [LARGE SCALE GENOMIC DNA]</scope>
    <source>
        <strain>Mu3 / ATCC 700698</strain>
    </source>
</reference>
<keyword id="KW-1003">Cell membrane</keyword>
<keyword id="KW-0472">Membrane</keyword>
<keyword id="KW-0812">Transmembrane</keyword>
<keyword id="KW-1133">Transmembrane helix</keyword>
<organism>
    <name type="scientific">Staphylococcus aureus (strain Mu3 / ATCC 700698)</name>
    <dbReference type="NCBI Taxonomy" id="418127"/>
    <lineage>
        <taxon>Bacteria</taxon>
        <taxon>Bacillati</taxon>
        <taxon>Bacillota</taxon>
        <taxon>Bacilli</taxon>
        <taxon>Bacillales</taxon>
        <taxon>Staphylococcaceae</taxon>
        <taxon>Staphylococcus</taxon>
    </lineage>
</organism>